<reference key="1">
    <citation type="journal article" date="2005" name="J. Bacteriol.">
        <title>Insights on evolution of virulence and resistance from the complete genome analysis of an early methicillin-resistant Staphylococcus aureus strain and a biofilm-producing methicillin-resistant Staphylococcus epidermidis strain.</title>
        <authorList>
            <person name="Gill S.R."/>
            <person name="Fouts D.E."/>
            <person name="Archer G.L."/>
            <person name="Mongodin E.F."/>
            <person name="DeBoy R.T."/>
            <person name="Ravel J."/>
            <person name="Paulsen I.T."/>
            <person name="Kolonay J.F."/>
            <person name="Brinkac L.M."/>
            <person name="Beanan M.J."/>
            <person name="Dodson R.J."/>
            <person name="Daugherty S.C."/>
            <person name="Madupu R."/>
            <person name="Angiuoli S.V."/>
            <person name="Durkin A.S."/>
            <person name="Haft D.H."/>
            <person name="Vamathevan J.J."/>
            <person name="Khouri H."/>
            <person name="Utterback T.R."/>
            <person name="Lee C."/>
            <person name="Dimitrov G."/>
            <person name="Jiang L."/>
            <person name="Qin H."/>
            <person name="Weidman J."/>
            <person name="Tran K."/>
            <person name="Kang K.H."/>
            <person name="Hance I.R."/>
            <person name="Nelson K.E."/>
            <person name="Fraser C.M."/>
        </authorList>
    </citation>
    <scope>NUCLEOTIDE SEQUENCE [LARGE SCALE GENOMIC DNA]</scope>
    <source>
        <strain>COL</strain>
    </source>
</reference>
<proteinExistence type="inferred from homology"/>
<sequence>MTKIIFMGTPDFSTTVLEMLIAEHDVIAVVTQPDRPVGRKRVMTPPPVKKVAMKYDLPVYQPEKLSGSEELEQLLQLDVDLIVTAAFGQLLPESLLALPNLGAINVHASLLPKYRGGAPIHQAIIDGEQETGITIMYMVKKLDAGNIISQQAIKIEENDNVGTMHDKLSVLGADLLKETLPSIIEGTNESVPQDDTQATFASNIRREDERISWNKPGRQVFNQIRGLSPWPVAYTTMDDTNLKIYDAELVETNKINEPGTIIETTKKAIIVATNDNEAVAIKDMQLAGKKRMLAANYLSGAQNTLVGKKLI</sequence>
<keyword id="KW-0648">Protein biosynthesis</keyword>
<keyword id="KW-0808">Transferase</keyword>
<gene>
    <name evidence="1" type="primary">fmt</name>
    <name type="ordered locus">SACOL1228</name>
</gene>
<dbReference type="EC" id="2.1.2.9" evidence="1"/>
<dbReference type="EMBL" id="CP000046">
    <property type="protein sequence ID" value="AAW38065.1"/>
    <property type="molecule type" value="Genomic_DNA"/>
</dbReference>
<dbReference type="RefSeq" id="WP_000161299.1">
    <property type="nucleotide sequence ID" value="NZ_JBGOFO010000002.1"/>
</dbReference>
<dbReference type="SMR" id="Q5HGL6"/>
<dbReference type="KEGG" id="sac:SACOL1228"/>
<dbReference type="HOGENOM" id="CLU_033347_1_1_9"/>
<dbReference type="Proteomes" id="UP000000530">
    <property type="component" value="Chromosome"/>
</dbReference>
<dbReference type="GO" id="GO:0005829">
    <property type="term" value="C:cytosol"/>
    <property type="evidence" value="ECO:0007669"/>
    <property type="project" value="TreeGrafter"/>
</dbReference>
<dbReference type="GO" id="GO:0004479">
    <property type="term" value="F:methionyl-tRNA formyltransferase activity"/>
    <property type="evidence" value="ECO:0007669"/>
    <property type="project" value="UniProtKB-UniRule"/>
</dbReference>
<dbReference type="CDD" id="cd08646">
    <property type="entry name" value="FMT_core_Met-tRNA-FMT_N"/>
    <property type="match status" value="1"/>
</dbReference>
<dbReference type="CDD" id="cd08704">
    <property type="entry name" value="Met_tRNA_FMT_C"/>
    <property type="match status" value="1"/>
</dbReference>
<dbReference type="FunFam" id="3.40.50.170:FF:000004">
    <property type="entry name" value="Methionyl-tRNA formyltransferase"/>
    <property type="match status" value="1"/>
</dbReference>
<dbReference type="Gene3D" id="3.10.25.10">
    <property type="entry name" value="Formyl transferase, C-terminal domain"/>
    <property type="match status" value="1"/>
</dbReference>
<dbReference type="Gene3D" id="3.40.50.170">
    <property type="entry name" value="Formyl transferase, N-terminal domain"/>
    <property type="match status" value="1"/>
</dbReference>
<dbReference type="HAMAP" id="MF_00182">
    <property type="entry name" value="Formyl_trans"/>
    <property type="match status" value="1"/>
</dbReference>
<dbReference type="InterPro" id="IPR005794">
    <property type="entry name" value="Fmt"/>
</dbReference>
<dbReference type="InterPro" id="IPR005793">
    <property type="entry name" value="Formyl_trans_C"/>
</dbReference>
<dbReference type="InterPro" id="IPR037022">
    <property type="entry name" value="Formyl_trans_C_sf"/>
</dbReference>
<dbReference type="InterPro" id="IPR002376">
    <property type="entry name" value="Formyl_transf_N"/>
</dbReference>
<dbReference type="InterPro" id="IPR036477">
    <property type="entry name" value="Formyl_transf_N_sf"/>
</dbReference>
<dbReference type="InterPro" id="IPR011034">
    <property type="entry name" value="Formyl_transferase-like_C_sf"/>
</dbReference>
<dbReference type="InterPro" id="IPR001555">
    <property type="entry name" value="GART_AS"/>
</dbReference>
<dbReference type="InterPro" id="IPR044135">
    <property type="entry name" value="Met-tRNA-FMT_C"/>
</dbReference>
<dbReference type="InterPro" id="IPR041711">
    <property type="entry name" value="Met-tRNA-FMT_N"/>
</dbReference>
<dbReference type="NCBIfam" id="TIGR00460">
    <property type="entry name" value="fmt"/>
    <property type="match status" value="1"/>
</dbReference>
<dbReference type="PANTHER" id="PTHR11138">
    <property type="entry name" value="METHIONYL-TRNA FORMYLTRANSFERASE"/>
    <property type="match status" value="1"/>
</dbReference>
<dbReference type="PANTHER" id="PTHR11138:SF5">
    <property type="entry name" value="METHIONYL-TRNA FORMYLTRANSFERASE, MITOCHONDRIAL"/>
    <property type="match status" value="1"/>
</dbReference>
<dbReference type="Pfam" id="PF02911">
    <property type="entry name" value="Formyl_trans_C"/>
    <property type="match status" value="1"/>
</dbReference>
<dbReference type="Pfam" id="PF00551">
    <property type="entry name" value="Formyl_trans_N"/>
    <property type="match status" value="1"/>
</dbReference>
<dbReference type="SUPFAM" id="SSF50486">
    <property type="entry name" value="FMT C-terminal domain-like"/>
    <property type="match status" value="1"/>
</dbReference>
<dbReference type="SUPFAM" id="SSF53328">
    <property type="entry name" value="Formyltransferase"/>
    <property type="match status" value="1"/>
</dbReference>
<dbReference type="PROSITE" id="PS00373">
    <property type="entry name" value="GART"/>
    <property type="match status" value="1"/>
</dbReference>
<name>FMT_STAAC</name>
<feature type="chain" id="PRO_0000083045" description="Methionyl-tRNA formyltransferase">
    <location>
        <begin position="1"/>
        <end position="311"/>
    </location>
</feature>
<feature type="binding site" evidence="1">
    <location>
        <begin position="109"/>
        <end position="112"/>
    </location>
    <ligand>
        <name>(6S)-5,6,7,8-tetrahydrofolate</name>
        <dbReference type="ChEBI" id="CHEBI:57453"/>
    </ligand>
</feature>
<comment type="function">
    <text evidence="1">Attaches a formyl group to the free amino group of methionyl-tRNA(fMet). The formyl group appears to play a dual role in the initiator identity of N-formylmethionyl-tRNA by promoting its recognition by IF2 and preventing the misappropriation of this tRNA by the elongation apparatus.</text>
</comment>
<comment type="catalytic activity">
    <reaction evidence="1">
        <text>L-methionyl-tRNA(fMet) + (6R)-10-formyltetrahydrofolate = N-formyl-L-methionyl-tRNA(fMet) + (6S)-5,6,7,8-tetrahydrofolate + H(+)</text>
        <dbReference type="Rhea" id="RHEA:24380"/>
        <dbReference type="Rhea" id="RHEA-COMP:9952"/>
        <dbReference type="Rhea" id="RHEA-COMP:9953"/>
        <dbReference type="ChEBI" id="CHEBI:15378"/>
        <dbReference type="ChEBI" id="CHEBI:57453"/>
        <dbReference type="ChEBI" id="CHEBI:78530"/>
        <dbReference type="ChEBI" id="CHEBI:78844"/>
        <dbReference type="ChEBI" id="CHEBI:195366"/>
        <dbReference type="EC" id="2.1.2.9"/>
    </reaction>
</comment>
<comment type="similarity">
    <text evidence="1">Belongs to the Fmt family.</text>
</comment>
<protein>
    <recommendedName>
        <fullName evidence="1">Methionyl-tRNA formyltransferase</fullName>
        <ecNumber evidence="1">2.1.2.9</ecNumber>
    </recommendedName>
</protein>
<organism>
    <name type="scientific">Staphylococcus aureus (strain COL)</name>
    <dbReference type="NCBI Taxonomy" id="93062"/>
    <lineage>
        <taxon>Bacteria</taxon>
        <taxon>Bacillati</taxon>
        <taxon>Bacillota</taxon>
        <taxon>Bacilli</taxon>
        <taxon>Bacillales</taxon>
        <taxon>Staphylococcaceae</taxon>
        <taxon>Staphylococcus</taxon>
    </lineage>
</organism>
<accession>Q5HGL6</accession>
<evidence type="ECO:0000255" key="1">
    <source>
        <dbReference type="HAMAP-Rule" id="MF_00182"/>
    </source>
</evidence>